<feature type="chain" id="PRO_1000203366" description="dCTP deaminase">
    <location>
        <begin position="1"/>
        <end position="188"/>
    </location>
</feature>
<feature type="active site" description="Proton donor/acceptor" evidence="1">
    <location>
        <position position="137"/>
    </location>
</feature>
<feature type="binding site" evidence="1">
    <location>
        <begin position="111"/>
        <end position="116"/>
    </location>
    <ligand>
        <name>dCTP</name>
        <dbReference type="ChEBI" id="CHEBI:61481"/>
    </ligand>
</feature>
<feature type="binding site" evidence="1">
    <location>
        <begin position="135"/>
        <end position="137"/>
    </location>
    <ligand>
        <name>dCTP</name>
        <dbReference type="ChEBI" id="CHEBI:61481"/>
    </ligand>
</feature>
<feature type="binding site" evidence="1">
    <location>
        <position position="156"/>
    </location>
    <ligand>
        <name>dCTP</name>
        <dbReference type="ChEBI" id="CHEBI:61481"/>
    </ligand>
</feature>
<feature type="binding site" evidence="1">
    <location>
        <position position="170"/>
    </location>
    <ligand>
        <name>dCTP</name>
        <dbReference type="ChEBI" id="CHEBI:61481"/>
    </ligand>
</feature>
<feature type="binding site" evidence="1">
    <location>
        <position position="179"/>
    </location>
    <ligand>
        <name>dCTP</name>
        <dbReference type="ChEBI" id="CHEBI:61481"/>
    </ligand>
</feature>
<feature type="binding site" evidence="1">
    <location>
        <position position="180"/>
    </location>
    <ligand>
        <name>dCTP</name>
        <dbReference type="ChEBI" id="CHEBI:61481"/>
    </ligand>
</feature>
<proteinExistence type="inferred from homology"/>
<protein>
    <recommendedName>
        <fullName evidence="1">dCTP deaminase</fullName>
        <ecNumber evidence="1">3.5.4.13</ecNumber>
    </recommendedName>
    <alternativeName>
        <fullName evidence="1">Deoxycytidine triphosphate deaminase</fullName>
    </alternativeName>
</protein>
<organism>
    <name type="scientific">Rickettsia peacockii (strain Rustic)</name>
    <dbReference type="NCBI Taxonomy" id="562019"/>
    <lineage>
        <taxon>Bacteria</taxon>
        <taxon>Pseudomonadati</taxon>
        <taxon>Pseudomonadota</taxon>
        <taxon>Alphaproteobacteria</taxon>
        <taxon>Rickettsiales</taxon>
        <taxon>Rickettsiaceae</taxon>
        <taxon>Rickettsieae</taxon>
        <taxon>Rickettsia</taxon>
        <taxon>spotted fever group</taxon>
    </lineage>
</organism>
<gene>
    <name evidence="1" type="primary">dcd</name>
    <name type="ordered locus">RPR_02590</name>
</gene>
<keyword id="KW-0378">Hydrolase</keyword>
<keyword id="KW-0546">Nucleotide metabolism</keyword>
<keyword id="KW-0547">Nucleotide-binding</keyword>
<reference key="1">
    <citation type="journal article" date="2009" name="PLoS ONE">
        <title>Genome sequence of the endosymbiont Rickettsia peacockii and comparison with virulent Rickettsia rickettsii: identification of virulence factors.</title>
        <authorList>
            <person name="Felsheim R.F."/>
            <person name="Kurtti T.J."/>
            <person name="Munderloh U.G."/>
        </authorList>
    </citation>
    <scope>NUCLEOTIDE SEQUENCE [LARGE SCALE GENOMIC DNA]</scope>
    <source>
        <strain>Rustic</strain>
    </source>
</reference>
<accession>C4K188</accession>
<name>DCD_RICPU</name>
<dbReference type="EC" id="3.5.4.13" evidence="1"/>
<dbReference type="EMBL" id="CP001227">
    <property type="protein sequence ID" value="ACR47339.1"/>
    <property type="molecule type" value="Genomic_DNA"/>
</dbReference>
<dbReference type="RefSeq" id="WP_004996797.1">
    <property type="nucleotide sequence ID" value="NC_012730.1"/>
</dbReference>
<dbReference type="SMR" id="C4K188"/>
<dbReference type="GeneID" id="95361829"/>
<dbReference type="KEGG" id="rpk:RPR_02590"/>
<dbReference type="HOGENOM" id="CLU_087476_4_0_5"/>
<dbReference type="UniPathway" id="UPA00610">
    <property type="reaction ID" value="UER00665"/>
</dbReference>
<dbReference type="Proteomes" id="UP000005015">
    <property type="component" value="Chromosome"/>
</dbReference>
<dbReference type="GO" id="GO:0008829">
    <property type="term" value="F:dCTP deaminase activity"/>
    <property type="evidence" value="ECO:0007669"/>
    <property type="project" value="UniProtKB-UniRule"/>
</dbReference>
<dbReference type="GO" id="GO:0000166">
    <property type="term" value="F:nucleotide binding"/>
    <property type="evidence" value="ECO:0007669"/>
    <property type="project" value="UniProtKB-KW"/>
</dbReference>
<dbReference type="GO" id="GO:0006226">
    <property type="term" value="P:dUMP biosynthetic process"/>
    <property type="evidence" value="ECO:0007669"/>
    <property type="project" value="UniProtKB-UniPathway"/>
</dbReference>
<dbReference type="GO" id="GO:0006229">
    <property type="term" value="P:dUTP biosynthetic process"/>
    <property type="evidence" value="ECO:0007669"/>
    <property type="project" value="UniProtKB-UniRule"/>
</dbReference>
<dbReference type="CDD" id="cd07557">
    <property type="entry name" value="trimeric_dUTPase"/>
    <property type="match status" value="1"/>
</dbReference>
<dbReference type="FunFam" id="2.70.40.10:FF:000001">
    <property type="entry name" value="dCTP deaminase"/>
    <property type="match status" value="1"/>
</dbReference>
<dbReference type="Gene3D" id="2.70.40.10">
    <property type="match status" value="1"/>
</dbReference>
<dbReference type="HAMAP" id="MF_00146">
    <property type="entry name" value="dCTP_deaminase"/>
    <property type="match status" value="1"/>
</dbReference>
<dbReference type="InterPro" id="IPR011962">
    <property type="entry name" value="dCTP_deaminase"/>
</dbReference>
<dbReference type="InterPro" id="IPR036157">
    <property type="entry name" value="dUTPase-like_sf"/>
</dbReference>
<dbReference type="InterPro" id="IPR033704">
    <property type="entry name" value="dUTPase_trimeric"/>
</dbReference>
<dbReference type="NCBIfam" id="TIGR02274">
    <property type="entry name" value="dCTP_deam"/>
    <property type="match status" value="1"/>
</dbReference>
<dbReference type="PANTHER" id="PTHR42680">
    <property type="entry name" value="DCTP DEAMINASE"/>
    <property type="match status" value="1"/>
</dbReference>
<dbReference type="PANTHER" id="PTHR42680:SF3">
    <property type="entry name" value="DCTP DEAMINASE"/>
    <property type="match status" value="1"/>
</dbReference>
<dbReference type="Pfam" id="PF22769">
    <property type="entry name" value="DCD"/>
    <property type="match status" value="1"/>
</dbReference>
<dbReference type="SUPFAM" id="SSF51283">
    <property type="entry name" value="dUTPase-like"/>
    <property type="match status" value="1"/>
</dbReference>
<comment type="function">
    <text evidence="1">Catalyzes the deamination of dCTP to dUTP.</text>
</comment>
<comment type="catalytic activity">
    <reaction evidence="1">
        <text>dCTP + H2O + H(+) = dUTP + NH4(+)</text>
        <dbReference type="Rhea" id="RHEA:22680"/>
        <dbReference type="ChEBI" id="CHEBI:15377"/>
        <dbReference type="ChEBI" id="CHEBI:15378"/>
        <dbReference type="ChEBI" id="CHEBI:28938"/>
        <dbReference type="ChEBI" id="CHEBI:61481"/>
        <dbReference type="ChEBI" id="CHEBI:61555"/>
        <dbReference type="EC" id="3.5.4.13"/>
    </reaction>
</comment>
<comment type="pathway">
    <text evidence="1">Pyrimidine metabolism; dUMP biosynthesis; dUMP from dCTP (dUTP route): step 1/2.</text>
</comment>
<comment type="subunit">
    <text evidence="1">Homotrimer.</text>
</comment>
<comment type="similarity">
    <text evidence="1">Belongs to the dCTP deaminase family.</text>
</comment>
<evidence type="ECO:0000255" key="1">
    <source>
        <dbReference type="HAMAP-Rule" id="MF_00146"/>
    </source>
</evidence>
<sequence>MAIMSDKWIKEAVINHSMIRPFAEKQVRVHNKEKIISYGLSSYGYDARVSNEFKIFTNINSTTVDPKNFSEYNLVDREVDVCIIPPNSFALGRTIEYFKIPRDVLVICVGKSTYARCGIIVNVTPLEPEWEGHVTLEFSNTTPLPAKIYANEGACQFLFLKSDQICDTSYADRQGKYMKQVGVTLPLT</sequence>